<dbReference type="EMBL" id="BA000037">
    <property type="protein sequence ID" value="BAC95321.1"/>
    <property type="status" value="ALT_INIT"/>
    <property type="molecule type" value="Genomic_DNA"/>
</dbReference>
<dbReference type="RefSeq" id="WP_011079762.1">
    <property type="nucleotide sequence ID" value="NC_005139.1"/>
</dbReference>
<dbReference type="SMR" id="Q7MIG0"/>
<dbReference type="STRING" id="672.VV93_v1c22760"/>
<dbReference type="GeneID" id="93896087"/>
<dbReference type="KEGG" id="vvy:VV2557"/>
<dbReference type="eggNOG" id="COG0052">
    <property type="taxonomic scope" value="Bacteria"/>
</dbReference>
<dbReference type="HOGENOM" id="CLU_040318_1_0_6"/>
<dbReference type="Proteomes" id="UP000002675">
    <property type="component" value="Chromosome I"/>
</dbReference>
<dbReference type="GO" id="GO:0022627">
    <property type="term" value="C:cytosolic small ribosomal subunit"/>
    <property type="evidence" value="ECO:0007669"/>
    <property type="project" value="TreeGrafter"/>
</dbReference>
<dbReference type="GO" id="GO:0003735">
    <property type="term" value="F:structural constituent of ribosome"/>
    <property type="evidence" value="ECO:0007669"/>
    <property type="project" value="InterPro"/>
</dbReference>
<dbReference type="GO" id="GO:0006412">
    <property type="term" value="P:translation"/>
    <property type="evidence" value="ECO:0007669"/>
    <property type="project" value="UniProtKB-UniRule"/>
</dbReference>
<dbReference type="CDD" id="cd01425">
    <property type="entry name" value="RPS2"/>
    <property type="match status" value="1"/>
</dbReference>
<dbReference type="FunFam" id="1.10.287.610:FF:000001">
    <property type="entry name" value="30S ribosomal protein S2"/>
    <property type="match status" value="1"/>
</dbReference>
<dbReference type="Gene3D" id="3.40.50.10490">
    <property type="entry name" value="Glucose-6-phosphate isomerase like protein, domain 1"/>
    <property type="match status" value="1"/>
</dbReference>
<dbReference type="Gene3D" id="1.10.287.610">
    <property type="entry name" value="Helix hairpin bin"/>
    <property type="match status" value="1"/>
</dbReference>
<dbReference type="HAMAP" id="MF_00291_B">
    <property type="entry name" value="Ribosomal_uS2_B"/>
    <property type="match status" value="1"/>
</dbReference>
<dbReference type="InterPro" id="IPR001865">
    <property type="entry name" value="Ribosomal_uS2"/>
</dbReference>
<dbReference type="InterPro" id="IPR005706">
    <property type="entry name" value="Ribosomal_uS2_bac/mit/plastid"/>
</dbReference>
<dbReference type="InterPro" id="IPR018130">
    <property type="entry name" value="Ribosomal_uS2_CS"/>
</dbReference>
<dbReference type="InterPro" id="IPR023591">
    <property type="entry name" value="Ribosomal_uS2_flav_dom_sf"/>
</dbReference>
<dbReference type="NCBIfam" id="TIGR01011">
    <property type="entry name" value="rpsB_bact"/>
    <property type="match status" value="1"/>
</dbReference>
<dbReference type="PANTHER" id="PTHR12534">
    <property type="entry name" value="30S RIBOSOMAL PROTEIN S2 PROKARYOTIC AND ORGANELLAR"/>
    <property type="match status" value="1"/>
</dbReference>
<dbReference type="PANTHER" id="PTHR12534:SF0">
    <property type="entry name" value="SMALL RIBOSOMAL SUBUNIT PROTEIN US2M"/>
    <property type="match status" value="1"/>
</dbReference>
<dbReference type="Pfam" id="PF00318">
    <property type="entry name" value="Ribosomal_S2"/>
    <property type="match status" value="1"/>
</dbReference>
<dbReference type="PRINTS" id="PR00395">
    <property type="entry name" value="RIBOSOMALS2"/>
</dbReference>
<dbReference type="SUPFAM" id="SSF52313">
    <property type="entry name" value="Ribosomal protein S2"/>
    <property type="match status" value="1"/>
</dbReference>
<dbReference type="PROSITE" id="PS00962">
    <property type="entry name" value="RIBOSOMAL_S2_1"/>
    <property type="match status" value="1"/>
</dbReference>
<dbReference type="PROSITE" id="PS00963">
    <property type="entry name" value="RIBOSOMAL_S2_2"/>
    <property type="match status" value="1"/>
</dbReference>
<comment type="similarity">
    <text evidence="1">Belongs to the universal ribosomal protein uS2 family.</text>
</comment>
<comment type="sequence caution" evidence="2">
    <conflict type="erroneous initiation">
        <sequence resource="EMBL-CDS" id="BAC95321"/>
    </conflict>
</comment>
<accession>Q7MIG0</accession>
<feature type="chain" id="PRO_0000134274" description="Small ribosomal subunit protein uS2">
    <location>
        <begin position="1"/>
        <end position="242"/>
    </location>
</feature>
<keyword id="KW-0687">Ribonucleoprotein</keyword>
<keyword id="KW-0689">Ribosomal protein</keyword>
<reference key="1">
    <citation type="journal article" date="2003" name="Genome Res.">
        <title>Comparative genome analysis of Vibrio vulnificus, a marine pathogen.</title>
        <authorList>
            <person name="Chen C.-Y."/>
            <person name="Wu K.-M."/>
            <person name="Chang Y.-C."/>
            <person name="Chang C.-H."/>
            <person name="Tsai H.-C."/>
            <person name="Liao T.-L."/>
            <person name="Liu Y.-M."/>
            <person name="Chen H.-J."/>
            <person name="Shen A.B.-T."/>
            <person name="Li J.-C."/>
            <person name="Su T.-L."/>
            <person name="Shao C.-P."/>
            <person name="Lee C.-T."/>
            <person name="Hor L.-I."/>
            <person name="Tsai S.-F."/>
        </authorList>
    </citation>
    <scope>NUCLEOTIDE SEQUENCE [LARGE SCALE GENOMIC DNA]</scope>
    <source>
        <strain>YJ016</strain>
    </source>
</reference>
<proteinExistence type="inferred from homology"/>
<name>RS2_VIBVY</name>
<organism>
    <name type="scientific">Vibrio vulnificus (strain YJ016)</name>
    <dbReference type="NCBI Taxonomy" id="196600"/>
    <lineage>
        <taxon>Bacteria</taxon>
        <taxon>Pseudomonadati</taxon>
        <taxon>Pseudomonadota</taxon>
        <taxon>Gammaproteobacteria</taxon>
        <taxon>Vibrionales</taxon>
        <taxon>Vibrionaceae</taxon>
        <taxon>Vibrio</taxon>
    </lineage>
</organism>
<gene>
    <name evidence="1" type="primary">rpsB</name>
    <name type="ordered locus">VV2557</name>
</gene>
<protein>
    <recommendedName>
        <fullName evidence="1">Small ribosomal subunit protein uS2</fullName>
    </recommendedName>
    <alternativeName>
        <fullName evidence="2">30S ribosomal protein S2</fullName>
    </alternativeName>
</protein>
<evidence type="ECO:0000255" key="1">
    <source>
        <dbReference type="HAMAP-Rule" id="MF_00291"/>
    </source>
</evidence>
<evidence type="ECO:0000305" key="2"/>
<sequence>MATVSMRDMLKAGVHFGHQTRYWNPKMKPFIFGARNRVHIINLEKTVPMFNEALAELVKVGEKKGKVLFVGTKRAASEAVKEAAIASNQYYVNNRWLGGMLTNYKTVRQSIKRLKELEVQSTDGTFDKLTKKEALMRTREMEKLEKSLGGIKDMGGLPDALFVIDADHEHIAIKEANNLGIPVFAVVDTNSNPDGVDYIIPGNDDAIRAVQLYLNAAASSLTEGRNKDVAAVAEKDGFVEAE</sequence>